<comment type="cofactor">
    <cofactor evidence="1">
        <name>Zn(2+)</name>
        <dbReference type="ChEBI" id="CHEBI:29105"/>
    </cofactor>
    <text evidence="1">Binds 3 Zn(2+) ions per subunit.</text>
</comment>
<comment type="subunit">
    <text evidence="1">Homotrimer.</text>
</comment>
<comment type="similarity">
    <text evidence="1">Belongs to the PHP family.</text>
</comment>
<proteinExistence type="inferred from homology"/>
<dbReference type="EC" id="3.1.3.-" evidence="1"/>
<dbReference type="EMBL" id="CP001657">
    <property type="protein sequence ID" value="ACT12839.1"/>
    <property type="molecule type" value="Genomic_DNA"/>
</dbReference>
<dbReference type="RefSeq" id="WP_015840045.1">
    <property type="nucleotide sequence ID" value="NC_012917.1"/>
</dbReference>
<dbReference type="SMR" id="C6DFD0"/>
<dbReference type="STRING" id="561230.PC1_1798"/>
<dbReference type="KEGG" id="pct:PC1_1798"/>
<dbReference type="eggNOG" id="COG1387">
    <property type="taxonomic scope" value="Bacteria"/>
</dbReference>
<dbReference type="HOGENOM" id="CLU_061999_0_1_6"/>
<dbReference type="OrthoDB" id="9808747at2"/>
<dbReference type="Proteomes" id="UP000002736">
    <property type="component" value="Chromosome"/>
</dbReference>
<dbReference type="GO" id="GO:0005829">
    <property type="term" value="C:cytosol"/>
    <property type="evidence" value="ECO:0007669"/>
    <property type="project" value="TreeGrafter"/>
</dbReference>
<dbReference type="GO" id="GO:0016791">
    <property type="term" value="F:phosphatase activity"/>
    <property type="evidence" value="ECO:0007669"/>
    <property type="project" value="UniProtKB-UniRule"/>
</dbReference>
<dbReference type="GO" id="GO:0008270">
    <property type="term" value="F:zinc ion binding"/>
    <property type="evidence" value="ECO:0007669"/>
    <property type="project" value="UniProtKB-UniRule"/>
</dbReference>
<dbReference type="GO" id="GO:0071978">
    <property type="term" value="P:bacterial-type flagellum-dependent swarming motility"/>
    <property type="evidence" value="ECO:0007669"/>
    <property type="project" value="TreeGrafter"/>
</dbReference>
<dbReference type="CDD" id="cd07437">
    <property type="entry name" value="PHP_HisPPase_Ycdx_like"/>
    <property type="match status" value="1"/>
</dbReference>
<dbReference type="FunFam" id="3.20.20.140:FF:000008">
    <property type="entry name" value="Probable phosphatase YcdX"/>
    <property type="match status" value="1"/>
</dbReference>
<dbReference type="Gene3D" id="3.20.20.140">
    <property type="entry name" value="Metal-dependent hydrolases"/>
    <property type="match status" value="1"/>
</dbReference>
<dbReference type="HAMAP" id="MF_01561">
    <property type="entry name" value="YcdX_phosphat"/>
    <property type="match status" value="1"/>
</dbReference>
<dbReference type="InterPro" id="IPR023710">
    <property type="entry name" value="Phosphatase_YcdX_put"/>
</dbReference>
<dbReference type="InterPro" id="IPR004013">
    <property type="entry name" value="PHP_dom"/>
</dbReference>
<dbReference type="InterPro" id="IPR050243">
    <property type="entry name" value="PHP_phosphatase"/>
</dbReference>
<dbReference type="InterPro" id="IPR003141">
    <property type="entry name" value="Pol/His_phosphatase_N"/>
</dbReference>
<dbReference type="InterPro" id="IPR016195">
    <property type="entry name" value="Pol/histidinol_Pase-like"/>
</dbReference>
<dbReference type="NCBIfam" id="NF006702">
    <property type="entry name" value="PRK09248.1"/>
    <property type="match status" value="1"/>
</dbReference>
<dbReference type="PANTHER" id="PTHR36928">
    <property type="entry name" value="PHOSPHATASE YCDX-RELATED"/>
    <property type="match status" value="1"/>
</dbReference>
<dbReference type="PANTHER" id="PTHR36928:SF1">
    <property type="entry name" value="PHOSPHATASE YCDX-RELATED"/>
    <property type="match status" value="1"/>
</dbReference>
<dbReference type="Pfam" id="PF02811">
    <property type="entry name" value="PHP"/>
    <property type="match status" value="1"/>
</dbReference>
<dbReference type="SMART" id="SM00481">
    <property type="entry name" value="POLIIIAc"/>
    <property type="match status" value="1"/>
</dbReference>
<dbReference type="SUPFAM" id="SSF89550">
    <property type="entry name" value="PHP domain-like"/>
    <property type="match status" value="1"/>
</dbReference>
<gene>
    <name type="ordered locus">PC1_1798</name>
</gene>
<feature type="chain" id="PRO_1000215509" description="Probable phosphatase PC1_1798">
    <location>
        <begin position="1"/>
        <end position="245"/>
    </location>
</feature>
<feature type="binding site" evidence="1">
    <location>
        <position position="7"/>
    </location>
    <ligand>
        <name>Zn(2+)</name>
        <dbReference type="ChEBI" id="CHEBI:29105"/>
        <label>1</label>
    </ligand>
</feature>
<feature type="binding site" evidence="1">
    <location>
        <position position="9"/>
    </location>
    <ligand>
        <name>Zn(2+)</name>
        <dbReference type="ChEBI" id="CHEBI:29105"/>
        <label>1</label>
    </ligand>
</feature>
<feature type="binding site" evidence="1">
    <location>
        <position position="15"/>
    </location>
    <ligand>
        <name>Zn(2+)</name>
        <dbReference type="ChEBI" id="CHEBI:29105"/>
        <label>2</label>
    </ligand>
</feature>
<feature type="binding site" evidence="1">
    <location>
        <position position="40"/>
    </location>
    <ligand>
        <name>Zn(2+)</name>
        <dbReference type="ChEBI" id="CHEBI:29105"/>
        <label>2</label>
    </ligand>
</feature>
<feature type="binding site" evidence="1">
    <location>
        <position position="73"/>
    </location>
    <ligand>
        <name>Zn(2+)</name>
        <dbReference type="ChEBI" id="CHEBI:29105"/>
        <label>1</label>
    </ligand>
</feature>
<feature type="binding site" evidence="1">
    <location>
        <position position="73"/>
    </location>
    <ligand>
        <name>Zn(2+)</name>
        <dbReference type="ChEBI" id="CHEBI:29105"/>
        <label>3</label>
    </ligand>
</feature>
<feature type="binding site" evidence="1">
    <location>
        <position position="101"/>
    </location>
    <ligand>
        <name>Zn(2+)</name>
        <dbReference type="ChEBI" id="CHEBI:29105"/>
        <label>3</label>
    </ligand>
</feature>
<feature type="binding site" evidence="1">
    <location>
        <position position="131"/>
    </location>
    <ligand>
        <name>Zn(2+)</name>
        <dbReference type="ChEBI" id="CHEBI:29105"/>
        <label>3</label>
    </ligand>
</feature>
<feature type="binding site" evidence="1">
    <location>
        <position position="192"/>
    </location>
    <ligand>
        <name>Zn(2+)</name>
        <dbReference type="ChEBI" id="CHEBI:29105"/>
        <label>1</label>
    </ligand>
</feature>
<feature type="binding site" evidence="1">
    <location>
        <position position="194"/>
    </location>
    <ligand>
        <name>Zn(2+)</name>
        <dbReference type="ChEBI" id="CHEBI:29105"/>
        <label>2</label>
    </ligand>
</feature>
<keyword id="KW-0378">Hydrolase</keyword>
<keyword id="KW-0479">Metal-binding</keyword>
<keyword id="KW-0862">Zinc</keyword>
<name>Y1798_PECCP</name>
<accession>C6DFD0</accession>
<organism>
    <name type="scientific">Pectobacterium carotovorum subsp. carotovorum (strain PC1)</name>
    <dbReference type="NCBI Taxonomy" id="561230"/>
    <lineage>
        <taxon>Bacteria</taxon>
        <taxon>Pseudomonadati</taxon>
        <taxon>Pseudomonadota</taxon>
        <taxon>Gammaproteobacteria</taxon>
        <taxon>Enterobacterales</taxon>
        <taxon>Pectobacteriaceae</taxon>
        <taxon>Pectobacterium</taxon>
    </lineage>
</organism>
<protein>
    <recommendedName>
        <fullName evidence="1">Probable phosphatase PC1_1798</fullName>
        <ecNumber evidence="1">3.1.3.-</ecNumber>
    </recommendedName>
</protein>
<sequence length="245" mass="27111">MYPVDLHMHTVASTHAYSTLHDYIAEAQQKNIRLFAITDHGPDMADAPHYWHFMNMRVWPRLVDGVGILRGIEANIKNIEGDIDCTGPMLDQVDVIIAGFHEPVFPPQDKDTHTAAMIATMARGDAHIISHPGNPKYPVDIRAIAEAAAKYNVALELNNSSFMHSRKGSEPNCRAIAEAVRDAGGLLSLGSDSHIAFSLGDFTHCERILQEVNFPQDQILNVSPRRVLDFLEQRGMPAIAELANL</sequence>
<reference key="1">
    <citation type="submission" date="2009-07" db="EMBL/GenBank/DDBJ databases">
        <title>Complete sequence of Pectobacterium carotovorum subsp. carotovorum PC1.</title>
        <authorList>
            <consortium name="US DOE Joint Genome Institute"/>
            <person name="Lucas S."/>
            <person name="Copeland A."/>
            <person name="Lapidus A."/>
            <person name="Glavina del Rio T."/>
            <person name="Tice H."/>
            <person name="Bruce D."/>
            <person name="Goodwin L."/>
            <person name="Pitluck S."/>
            <person name="Munk A.C."/>
            <person name="Brettin T."/>
            <person name="Detter J.C."/>
            <person name="Han C."/>
            <person name="Tapia R."/>
            <person name="Larimer F."/>
            <person name="Land M."/>
            <person name="Hauser L."/>
            <person name="Kyrpides N."/>
            <person name="Mikhailova N."/>
            <person name="Balakrishnan V."/>
            <person name="Glasner J."/>
            <person name="Perna N.T."/>
        </authorList>
    </citation>
    <scope>NUCLEOTIDE SEQUENCE [LARGE SCALE GENOMIC DNA]</scope>
    <source>
        <strain>PC1</strain>
    </source>
</reference>
<evidence type="ECO:0000255" key="1">
    <source>
        <dbReference type="HAMAP-Rule" id="MF_01561"/>
    </source>
</evidence>